<proteinExistence type="inferred from homology"/>
<accession>Q9Z8N9</accession>
<accession>Q9JQ71</accession>
<gene>
    <name evidence="1" type="primary">recR</name>
    <name type="ordered locus">CPn_0299</name>
    <name type="ordered locus">CP_0459</name>
    <name type="ordered locus">CpB0308</name>
</gene>
<comment type="function">
    <text evidence="1">May play a role in DNA repair. It seems to be involved in an RecBC-independent recombinational process of DNA repair. It may act with RecF and RecO.</text>
</comment>
<comment type="similarity">
    <text evidence="1">Belongs to the RecR family.</text>
</comment>
<feature type="chain" id="PRO_0000190304" description="Recombination protein RecR">
    <location>
        <begin position="1"/>
        <end position="200"/>
    </location>
</feature>
<feature type="domain" description="Toprim" evidence="1">
    <location>
        <begin position="82"/>
        <end position="177"/>
    </location>
</feature>
<feature type="zinc finger region" description="C4-type" evidence="1">
    <location>
        <begin position="58"/>
        <end position="75"/>
    </location>
</feature>
<reference key="1">
    <citation type="journal article" date="1999" name="Nat. Genet.">
        <title>Comparative genomes of Chlamydia pneumoniae and C. trachomatis.</title>
        <authorList>
            <person name="Kalman S."/>
            <person name="Mitchell W.P."/>
            <person name="Marathe R."/>
            <person name="Lammel C.J."/>
            <person name="Fan J."/>
            <person name="Hyman R.W."/>
            <person name="Olinger L."/>
            <person name="Grimwood J."/>
            <person name="Davis R.W."/>
            <person name="Stephens R.S."/>
        </authorList>
    </citation>
    <scope>NUCLEOTIDE SEQUENCE [LARGE SCALE GENOMIC DNA]</scope>
    <source>
        <strain>CWL029</strain>
    </source>
</reference>
<reference key="2">
    <citation type="journal article" date="2000" name="Nucleic Acids Res.">
        <title>Genome sequences of Chlamydia trachomatis MoPn and Chlamydia pneumoniae AR39.</title>
        <authorList>
            <person name="Read T.D."/>
            <person name="Brunham R.C."/>
            <person name="Shen C."/>
            <person name="Gill S.R."/>
            <person name="Heidelberg J.F."/>
            <person name="White O."/>
            <person name="Hickey E.K."/>
            <person name="Peterson J.D."/>
            <person name="Utterback T.R."/>
            <person name="Berry K.J."/>
            <person name="Bass S."/>
            <person name="Linher K.D."/>
            <person name="Weidman J.F."/>
            <person name="Khouri H.M."/>
            <person name="Craven B."/>
            <person name="Bowman C."/>
            <person name="Dodson R.J."/>
            <person name="Gwinn M.L."/>
            <person name="Nelson W.C."/>
            <person name="DeBoy R.T."/>
            <person name="Kolonay J.F."/>
            <person name="McClarty G."/>
            <person name="Salzberg S.L."/>
            <person name="Eisen J.A."/>
            <person name="Fraser C.M."/>
        </authorList>
    </citation>
    <scope>NUCLEOTIDE SEQUENCE [LARGE SCALE GENOMIC DNA]</scope>
    <source>
        <strain>AR39</strain>
    </source>
</reference>
<reference key="3">
    <citation type="journal article" date="2000" name="Nucleic Acids Res.">
        <title>Comparison of whole genome sequences of Chlamydia pneumoniae J138 from Japan and CWL029 from USA.</title>
        <authorList>
            <person name="Shirai M."/>
            <person name="Hirakawa H."/>
            <person name="Kimoto M."/>
            <person name="Tabuchi M."/>
            <person name="Kishi F."/>
            <person name="Ouchi K."/>
            <person name="Shiba T."/>
            <person name="Ishii K."/>
            <person name="Hattori M."/>
            <person name="Kuhara S."/>
            <person name="Nakazawa T."/>
        </authorList>
    </citation>
    <scope>NUCLEOTIDE SEQUENCE [LARGE SCALE GENOMIC DNA]</scope>
    <source>
        <strain>J138</strain>
    </source>
</reference>
<reference key="4">
    <citation type="submission" date="2002-05" db="EMBL/GenBank/DDBJ databases">
        <title>The genome sequence of Chlamydia pneumoniae TW183 and comparison with other Chlamydia strains based on whole genome sequence analysis.</title>
        <authorList>
            <person name="Geng M.M."/>
            <person name="Schuhmacher A."/>
            <person name="Muehldorfer I."/>
            <person name="Bensch K.W."/>
            <person name="Schaefer K.P."/>
            <person name="Schneider S."/>
            <person name="Pohl T."/>
            <person name="Essig A."/>
            <person name="Marre R."/>
            <person name="Melchers K."/>
        </authorList>
    </citation>
    <scope>NUCLEOTIDE SEQUENCE [LARGE SCALE GENOMIC DNA]</scope>
    <source>
        <strain>TW-183</strain>
    </source>
</reference>
<name>RECR_CHLPN</name>
<protein>
    <recommendedName>
        <fullName evidence="1">Recombination protein RecR</fullName>
    </recommendedName>
</protein>
<keyword id="KW-0227">DNA damage</keyword>
<keyword id="KW-0233">DNA recombination</keyword>
<keyword id="KW-0234">DNA repair</keyword>
<keyword id="KW-0479">Metal-binding</keyword>
<keyword id="KW-0862">Zinc</keyword>
<keyword id="KW-0863">Zinc-finger</keyword>
<dbReference type="EMBL" id="AE001363">
    <property type="protein sequence ID" value="AAD18448.1"/>
    <property type="molecule type" value="Genomic_DNA"/>
</dbReference>
<dbReference type="EMBL" id="AE002161">
    <property type="protein sequence ID" value="AAF38296.1"/>
    <property type="molecule type" value="Genomic_DNA"/>
</dbReference>
<dbReference type="EMBL" id="BA000008">
    <property type="protein sequence ID" value="BAA98509.1"/>
    <property type="molecule type" value="Genomic_DNA"/>
</dbReference>
<dbReference type="EMBL" id="AE009440">
    <property type="protein sequence ID" value="AAP98241.1"/>
    <property type="molecule type" value="Genomic_DNA"/>
</dbReference>
<dbReference type="PIR" id="C72094">
    <property type="entry name" value="C72094"/>
</dbReference>
<dbReference type="PIR" id="C86528">
    <property type="entry name" value="C86528"/>
</dbReference>
<dbReference type="RefSeq" id="NP_224504.1">
    <property type="nucleotide sequence ID" value="NC_000922.1"/>
</dbReference>
<dbReference type="RefSeq" id="WP_010882947.1">
    <property type="nucleotide sequence ID" value="NZ_LN847257.1"/>
</dbReference>
<dbReference type="SMR" id="Q9Z8N9"/>
<dbReference type="STRING" id="406984.CPK_ORF00807"/>
<dbReference type="GeneID" id="45050348"/>
<dbReference type="KEGG" id="cpa:CP_0459"/>
<dbReference type="KEGG" id="cpj:recR"/>
<dbReference type="KEGG" id="cpn:CPn_0299"/>
<dbReference type="KEGG" id="cpt:CpB0308"/>
<dbReference type="PATRIC" id="fig|115713.3.peg.333"/>
<dbReference type="eggNOG" id="COG0353">
    <property type="taxonomic scope" value="Bacteria"/>
</dbReference>
<dbReference type="HOGENOM" id="CLU_060739_1_1_0"/>
<dbReference type="OMA" id="DVMAIEN"/>
<dbReference type="OrthoDB" id="9802672at2"/>
<dbReference type="Proteomes" id="UP000000583">
    <property type="component" value="Chromosome"/>
</dbReference>
<dbReference type="Proteomes" id="UP000000801">
    <property type="component" value="Chromosome"/>
</dbReference>
<dbReference type="GO" id="GO:0003677">
    <property type="term" value="F:DNA binding"/>
    <property type="evidence" value="ECO:0007669"/>
    <property type="project" value="UniProtKB-UniRule"/>
</dbReference>
<dbReference type="GO" id="GO:0008270">
    <property type="term" value="F:zinc ion binding"/>
    <property type="evidence" value="ECO:0007669"/>
    <property type="project" value="UniProtKB-KW"/>
</dbReference>
<dbReference type="GO" id="GO:0006310">
    <property type="term" value="P:DNA recombination"/>
    <property type="evidence" value="ECO:0007669"/>
    <property type="project" value="UniProtKB-UniRule"/>
</dbReference>
<dbReference type="GO" id="GO:0006281">
    <property type="term" value="P:DNA repair"/>
    <property type="evidence" value="ECO:0007669"/>
    <property type="project" value="UniProtKB-UniRule"/>
</dbReference>
<dbReference type="CDD" id="cd01025">
    <property type="entry name" value="TOPRIM_recR"/>
    <property type="match status" value="1"/>
</dbReference>
<dbReference type="Gene3D" id="3.40.1360.10">
    <property type="match status" value="1"/>
</dbReference>
<dbReference type="Gene3D" id="6.10.250.240">
    <property type="match status" value="1"/>
</dbReference>
<dbReference type="Gene3D" id="1.10.8.420">
    <property type="entry name" value="RecR Domain 1"/>
    <property type="match status" value="1"/>
</dbReference>
<dbReference type="HAMAP" id="MF_00017">
    <property type="entry name" value="RecR"/>
    <property type="match status" value="1"/>
</dbReference>
<dbReference type="InterPro" id="IPR000093">
    <property type="entry name" value="DNA_Rcmb_RecR"/>
</dbReference>
<dbReference type="InterPro" id="IPR023627">
    <property type="entry name" value="Rcmb_RecR"/>
</dbReference>
<dbReference type="InterPro" id="IPR015967">
    <property type="entry name" value="Rcmb_RecR_Znf"/>
</dbReference>
<dbReference type="InterPro" id="IPR006171">
    <property type="entry name" value="TOPRIM_dom"/>
</dbReference>
<dbReference type="InterPro" id="IPR034137">
    <property type="entry name" value="TOPRIM_RecR"/>
</dbReference>
<dbReference type="NCBIfam" id="TIGR00615">
    <property type="entry name" value="recR"/>
    <property type="match status" value="1"/>
</dbReference>
<dbReference type="PANTHER" id="PTHR30446">
    <property type="entry name" value="RECOMBINATION PROTEIN RECR"/>
    <property type="match status" value="1"/>
</dbReference>
<dbReference type="PANTHER" id="PTHR30446:SF0">
    <property type="entry name" value="RECOMBINATION PROTEIN RECR"/>
    <property type="match status" value="1"/>
</dbReference>
<dbReference type="Pfam" id="PF21175">
    <property type="entry name" value="RecR_C"/>
    <property type="match status" value="1"/>
</dbReference>
<dbReference type="Pfam" id="PF21176">
    <property type="entry name" value="RecR_HhH"/>
    <property type="match status" value="1"/>
</dbReference>
<dbReference type="Pfam" id="PF13662">
    <property type="entry name" value="Toprim_4"/>
    <property type="match status" value="1"/>
</dbReference>
<dbReference type="SMART" id="SM00493">
    <property type="entry name" value="TOPRIM"/>
    <property type="match status" value="1"/>
</dbReference>
<dbReference type="SUPFAM" id="SSF111304">
    <property type="entry name" value="Recombination protein RecR"/>
    <property type="match status" value="1"/>
</dbReference>
<dbReference type="PROSITE" id="PS01300">
    <property type="entry name" value="RECR"/>
    <property type="match status" value="1"/>
</dbReference>
<dbReference type="PROSITE" id="PS50880">
    <property type="entry name" value="TOPRIM"/>
    <property type="match status" value="1"/>
</dbReference>
<sequence>MTRYPDYLSKLIFFLRKLPGIGFKTAEKLAFELISWDSEQLKILGNAFHNVASERSHCPLCFTLKESKEADCHFCREERDNQSLCIVASPKDVFFLERSKVFKGRYHVLGSLLSPITGKHIENERLSILKSRIETLCPKEIILAIDATLEGDATALFLKQELQHFSVNISRLALGLPIGLSFDYVDSGTLARAFSGRHSY</sequence>
<organism>
    <name type="scientific">Chlamydia pneumoniae</name>
    <name type="common">Chlamydophila pneumoniae</name>
    <dbReference type="NCBI Taxonomy" id="83558"/>
    <lineage>
        <taxon>Bacteria</taxon>
        <taxon>Pseudomonadati</taxon>
        <taxon>Chlamydiota</taxon>
        <taxon>Chlamydiia</taxon>
        <taxon>Chlamydiales</taxon>
        <taxon>Chlamydiaceae</taxon>
        <taxon>Chlamydia/Chlamydophila group</taxon>
        <taxon>Chlamydia</taxon>
    </lineage>
</organism>
<evidence type="ECO:0000255" key="1">
    <source>
        <dbReference type="HAMAP-Rule" id="MF_00017"/>
    </source>
</evidence>